<comment type="function">
    <text evidence="1">Constitutes one of the E3 ubiquitin-protein ligases that mediate monoubiquitination of 'Lys-119' of histone H2A, thereby playing a central role in histone code and gene regulation. H2A 'Lys-119' ubiquitination gives a specific tag for epigenetic transcriptional repression and participates in X chromosome inactivation of female mammals. Essential component of a Polycomb group (PcG) multiprotein PRC1-like complex, a complex class required to maintain the transcriptionally repressive state of many genes, including Hox genes, throughout development. PcG PRC1 complex acts via chromatin remodeling and modification of histones, rendering chromatin heritably changed in its expressibility. Compared to RNF2/RING2, it does not have the main E3 ubiquitin ligase activity on histone H2A, and it may rather act as a modulator of RNF2/RING2 activity (By similarity).</text>
</comment>
<comment type="catalytic activity">
    <reaction>
        <text>S-ubiquitinyl-[E2 ubiquitin-conjugating enzyme]-L-cysteine + [acceptor protein]-L-lysine = [E2 ubiquitin-conjugating enzyme]-L-cysteine + N(6)-ubiquitinyl-[acceptor protein]-L-lysine.</text>
        <dbReference type="EC" id="2.3.2.27"/>
    </reaction>
</comment>
<comment type="pathway">
    <text>Protein modification; protein ubiquitination.</text>
</comment>
<comment type="subunit">
    <text evidence="1 2">Component of chromatin-associated Polycomb (PcG) complexes. Part of the E2F6.com-1 complex in G0 phase composed of E2F6, MGA, MAX, TFDP1, CBX3, BAT8, EUHMTASE1, RING1, RNF2/RING2 MBLR, L3MBTL2 and YAF2. Interacts with CBX2 and PCGF6. Component of a PRC1-like complex. Component of repressive BCOR complex containing Polycomb group subcomplex at least composed of RYBP, PCGF1, BCOR and RNF2/RING2. Interacts with BMI1, PHC2, PCGF2, RNF2; CBX6, CBX7 and CBX8 (By similarity). Interacts with MN1 (By similarity).</text>
</comment>
<comment type="subcellular location">
    <subcellularLocation>
        <location evidence="1">Nucleus speckle</location>
    </subcellularLocation>
</comment>
<name>RING1_PANTR</name>
<sequence length="377" mass="39100">MDGTEIAVSPRSLHSELMCPICLDMLKNTMTTKECLHRFCSDCIVTALRSGNKECPTCRKKLVSKRSLRPDPNFDALISKIYPSREEYEAHQDRVLIRLSRLHNQQALSSSIEEGLRMQAMHRAQRVRRPIPGSDQTTTMSGGEGEPGEGEGDGEDVSSDSAPDSAPGPAPKRPRGGGAGGSSVGTGGGGTGGVGGGAGSEDSGDRGGTLGGGTLGPPSPPGAPSPPEPGGEIELVFRPHPLLVEKGEYCQTRYVKTTGNATVDHLSKYLALRIALERRQQQEAGEPGGPGGGASDTGGPDGGGGEGGGAGGGDGPEEPALPSLEGVSEKQYTIYIAPGGGAFTTLNGSLTLELVNEKFWKVSRPLELCYAPTKDPK</sequence>
<protein>
    <recommendedName>
        <fullName>E3 ubiquitin-protein ligase RING1</fullName>
        <ecNumber>2.3.2.27</ecNumber>
    </recommendedName>
    <alternativeName>
        <fullName>Polycomb complex protein RING1</fullName>
    </alternativeName>
    <alternativeName>
        <fullName>RING finger protein 1</fullName>
    </alternativeName>
    <alternativeName>
        <fullName evidence="6">RING-type E3 ubiquitin transferase RING1</fullName>
    </alternativeName>
</protein>
<accession>A2T6X5</accession>
<gene>
    <name type="primary">RING1</name>
</gene>
<feature type="chain" id="PRO_0000285537" description="E3 ubiquitin-protein ligase RING1">
    <location>
        <begin position="1"/>
        <end position="377"/>
    </location>
</feature>
<feature type="zinc finger region" description="RING-type" evidence="4">
    <location>
        <begin position="19"/>
        <end position="59"/>
    </location>
</feature>
<feature type="region of interest" description="Necessary for transcriptional repression" evidence="1">
    <location>
        <begin position="1"/>
        <end position="205"/>
    </location>
</feature>
<feature type="region of interest" description="Disordered" evidence="5">
    <location>
        <begin position="119"/>
        <end position="234"/>
    </location>
</feature>
<feature type="region of interest" description="Necessary for interaction with CBX2" evidence="1">
    <location>
        <begin position="201"/>
        <end position="377"/>
    </location>
</feature>
<feature type="region of interest" description="Disordered" evidence="5">
    <location>
        <begin position="280"/>
        <end position="325"/>
    </location>
</feature>
<feature type="short sequence motif" description="Nuclear localization signal" evidence="3">
    <location>
        <begin position="172"/>
        <end position="175"/>
    </location>
</feature>
<feature type="compositionally biased region" description="Acidic residues" evidence="5">
    <location>
        <begin position="146"/>
        <end position="158"/>
    </location>
</feature>
<feature type="compositionally biased region" description="Gly residues" evidence="5">
    <location>
        <begin position="176"/>
        <end position="199"/>
    </location>
</feature>
<feature type="compositionally biased region" description="Gly residues" evidence="5">
    <location>
        <begin position="206"/>
        <end position="215"/>
    </location>
</feature>
<feature type="compositionally biased region" description="Pro residues" evidence="5">
    <location>
        <begin position="217"/>
        <end position="229"/>
    </location>
</feature>
<feature type="compositionally biased region" description="Gly residues" evidence="5">
    <location>
        <begin position="286"/>
        <end position="314"/>
    </location>
</feature>
<feature type="modified residue" description="Phosphoserine" evidence="2">
    <location>
        <position position="9"/>
    </location>
</feature>
<feature type="modified residue" description="Phosphoserine" evidence="2">
    <location>
        <position position="111"/>
    </location>
</feature>
<feature type="modified residue" description="Phosphoserine" evidence="2">
    <location>
        <position position="158"/>
    </location>
</feature>
<feature type="modified residue" description="Phosphoserine" evidence="2">
    <location>
        <position position="161"/>
    </location>
</feature>
<feature type="modified residue" description="Phosphothreonine" evidence="2">
    <location>
        <position position="186"/>
    </location>
</feature>
<feature type="modified residue" description="Phosphothreonine" evidence="2">
    <location>
        <position position="191"/>
    </location>
</feature>
<feature type="modified residue" description="Phosphoserine" evidence="2">
    <location>
        <position position="200"/>
    </location>
</feature>
<feature type="modified residue" description="Phosphoserine" evidence="2">
    <location>
        <position position="203"/>
    </location>
</feature>
<feature type="modified residue" description="Phosphoserine" evidence="2">
    <location>
        <position position="219"/>
    </location>
</feature>
<feature type="modified residue" description="Phosphoserine" evidence="2">
    <location>
        <position position="225"/>
    </location>
</feature>
<reference key="1">
    <citation type="submission" date="2006-08" db="EMBL/GenBank/DDBJ databases">
        <title>Positive selection in transcription factor genes on the human lineage.</title>
        <authorList>
            <person name="Nickel G.C."/>
            <person name="Tefft D.L."/>
            <person name="Trevarthen K."/>
            <person name="Funt J."/>
            <person name="Adams M.D."/>
        </authorList>
    </citation>
    <scope>NUCLEOTIDE SEQUENCE [GENOMIC DNA]</scope>
</reference>
<proteinExistence type="inferred from homology"/>
<evidence type="ECO:0000250" key="1"/>
<evidence type="ECO:0000250" key="2">
    <source>
        <dbReference type="UniProtKB" id="Q06587"/>
    </source>
</evidence>
<evidence type="ECO:0000255" key="3"/>
<evidence type="ECO:0000255" key="4">
    <source>
        <dbReference type="PROSITE-ProRule" id="PRU00175"/>
    </source>
</evidence>
<evidence type="ECO:0000256" key="5">
    <source>
        <dbReference type="SAM" id="MobiDB-lite"/>
    </source>
</evidence>
<evidence type="ECO:0000305" key="6"/>
<dbReference type="EC" id="2.3.2.27"/>
<dbReference type="EMBL" id="DQ977325">
    <property type="protein sequence ID" value="ABM91930.1"/>
    <property type="molecule type" value="Genomic_DNA"/>
</dbReference>
<dbReference type="RefSeq" id="NP_001074951.1">
    <property type="nucleotide sequence ID" value="NM_001081482.1"/>
</dbReference>
<dbReference type="SMR" id="A2T6X5"/>
<dbReference type="STRING" id="9598.ENSPTRP00000056938"/>
<dbReference type="PaxDb" id="9598-ENSPTRP00000056938"/>
<dbReference type="GeneID" id="462604"/>
<dbReference type="KEGG" id="ptr:462604"/>
<dbReference type="CTD" id="6015"/>
<dbReference type="eggNOG" id="KOG0311">
    <property type="taxonomic scope" value="Eukaryota"/>
</dbReference>
<dbReference type="HOGENOM" id="CLU_056557_1_0_1"/>
<dbReference type="InParanoid" id="A2T6X5"/>
<dbReference type="TreeFam" id="TF105501"/>
<dbReference type="UniPathway" id="UPA00143"/>
<dbReference type="Proteomes" id="UP000002277">
    <property type="component" value="Unplaced"/>
</dbReference>
<dbReference type="GO" id="GO:0016607">
    <property type="term" value="C:nuclear speck"/>
    <property type="evidence" value="ECO:0007669"/>
    <property type="project" value="UniProtKB-SubCell"/>
</dbReference>
<dbReference type="GO" id="GO:0031519">
    <property type="term" value="C:PcG protein complex"/>
    <property type="evidence" value="ECO:0000250"/>
    <property type="project" value="UniProtKB"/>
</dbReference>
<dbReference type="GO" id="GO:0035102">
    <property type="term" value="C:PRC1 complex"/>
    <property type="evidence" value="ECO:0000250"/>
    <property type="project" value="UniProtKB"/>
</dbReference>
<dbReference type="GO" id="GO:0000151">
    <property type="term" value="C:ubiquitin ligase complex"/>
    <property type="evidence" value="ECO:0000318"/>
    <property type="project" value="GO_Central"/>
</dbReference>
<dbReference type="GO" id="GO:0003682">
    <property type="term" value="F:chromatin binding"/>
    <property type="evidence" value="ECO:0000318"/>
    <property type="project" value="GO_Central"/>
</dbReference>
<dbReference type="GO" id="GO:0061630">
    <property type="term" value="F:ubiquitin protein ligase activity"/>
    <property type="evidence" value="ECO:0000318"/>
    <property type="project" value="GO_Central"/>
</dbReference>
<dbReference type="GO" id="GO:0008270">
    <property type="term" value="F:zinc ion binding"/>
    <property type="evidence" value="ECO:0007669"/>
    <property type="project" value="UniProtKB-KW"/>
</dbReference>
<dbReference type="GO" id="GO:0006325">
    <property type="term" value="P:chromatin organization"/>
    <property type="evidence" value="ECO:0007669"/>
    <property type="project" value="UniProtKB-KW"/>
</dbReference>
<dbReference type="GO" id="GO:0045892">
    <property type="term" value="P:negative regulation of DNA-templated transcription"/>
    <property type="evidence" value="ECO:0000318"/>
    <property type="project" value="GO_Central"/>
</dbReference>
<dbReference type="GO" id="GO:0016567">
    <property type="term" value="P:protein ubiquitination"/>
    <property type="evidence" value="ECO:0007669"/>
    <property type="project" value="UniProtKB-UniPathway"/>
</dbReference>
<dbReference type="CDD" id="cd17166">
    <property type="entry name" value="RAWUL_RING1"/>
    <property type="match status" value="1"/>
</dbReference>
<dbReference type="CDD" id="cd16740">
    <property type="entry name" value="RING-HC_RING2"/>
    <property type="match status" value="1"/>
</dbReference>
<dbReference type="FunFam" id="3.30.40.10:FF:000100">
    <property type="entry name" value="E3 ubiquitin-protein ligase RING2"/>
    <property type="match status" value="1"/>
</dbReference>
<dbReference type="Gene3D" id="3.10.20.90">
    <property type="entry name" value="Phosphatidylinositol 3-kinase Catalytic Subunit, Chain A, domain 1"/>
    <property type="match status" value="1"/>
</dbReference>
<dbReference type="Gene3D" id="3.30.40.10">
    <property type="entry name" value="Zinc/RING finger domain, C3HC4 (zinc finger)"/>
    <property type="match status" value="1"/>
</dbReference>
<dbReference type="InterPro" id="IPR032443">
    <property type="entry name" value="RAWUL"/>
</dbReference>
<dbReference type="InterPro" id="IPR043540">
    <property type="entry name" value="RING1/RING2"/>
</dbReference>
<dbReference type="InterPro" id="IPR001841">
    <property type="entry name" value="Znf_RING"/>
</dbReference>
<dbReference type="InterPro" id="IPR013083">
    <property type="entry name" value="Znf_RING/FYVE/PHD"/>
</dbReference>
<dbReference type="InterPro" id="IPR017907">
    <property type="entry name" value="Znf_RING_CS"/>
</dbReference>
<dbReference type="PANTHER" id="PTHR46076:SF2">
    <property type="entry name" value="E3 UBIQUITIN-PROTEIN LIGASE RING1"/>
    <property type="match status" value="1"/>
</dbReference>
<dbReference type="PANTHER" id="PTHR46076">
    <property type="entry name" value="E3 UBIQUITIN-PROTEIN LIGASE RING1 / RING 2 FAMILY MEMBER"/>
    <property type="match status" value="1"/>
</dbReference>
<dbReference type="Pfam" id="PF16207">
    <property type="entry name" value="RAWUL"/>
    <property type="match status" value="1"/>
</dbReference>
<dbReference type="Pfam" id="PF13923">
    <property type="entry name" value="zf-C3HC4_2"/>
    <property type="match status" value="1"/>
</dbReference>
<dbReference type="SMART" id="SM00184">
    <property type="entry name" value="RING"/>
    <property type="match status" value="1"/>
</dbReference>
<dbReference type="SUPFAM" id="SSF57850">
    <property type="entry name" value="RING/U-box"/>
    <property type="match status" value="1"/>
</dbReference>
<dbReference type="PROSITE" id="PS00518">
    <property type="entry name" value="ZF_RING_1"/>
    <property type="match status" value="1"/>
</dbReference>
<dbReference type="PROSITE" id="PS50089">
    <property type="entry name" value="ZF_RING_2"/>
    <property type="match status" value="1"/>
</dbReference>
<organism>
    <name type="scientific">Pan troglodytes</name>
    <name type="common">Chimpanzee</name>
    <dbReference type="NCBI Taxonomy" id="9598"/>
    <lineage>
        <taxon>Eukaryota</taxon>
        <taxon>Metazoa</taxon>
        <taxon>Chordata</taxon>
        <taxon>Craniata</taxon>
        <taxon>Vertebrata</taxon>
        <taxon>Euteleostomi</taxon>
        <taxon>Mammalia</taxon>
        <taxon>Eutheria</taxon>
        <taxon>Euarchontoglires</taxon>
        <taxon>Primates</taxon>
        <taxon>Haplorrhini</taxon>
        <taxon>Catarrhini</taxon>
        <taxon>Hominidae</taxon>
        <taxon>Pan</taxon>
    </lineage>
</organism>
<keyword id="KW-0156">Chromatin regulator</keyword>
<keyword id="KW-0479">Metal-binding</keyword>
<keyword id="KW-0539">Nucleus</keyword>
<keyword id="KW-0597">Phosphoprotein</keyword>
<keyword id="KW-1185">Reference proteome</keyword>
<keyword id="KW-0678">Repressor</keyword>
<keyword id="KW-0804">Transcription</keyword>
<keyword id="KW-0805">Transcription regulation</keyword>
<keyword id="KW-0808">Transferase</keyword>
<keyword id="KW-0833">Ubl conjugation pathway</keyword>
<keyword id="KW-0862">Zinc</keyword>
<keyword id="KW-0863">Zinc-finger</keyword>